<evidence type="ECO:0000255" key="1">
    <source>
        <dbReference type="HAMAP-Rule" id="MF_00409"/>
    </source>
</evidence>
<dbReference type="EC" id="2.7.1.130" evidence="1"/>
<dbReference type="EMBL" id="CR555306">
    <property type="protein sequence ID" value="CAI09006.1"/>
    <property type="molecule type" value="Genomic_DNA"/>
</dbReference>
<dbReference type="RefSeq" id="WP_011238687.1">
    <property type="nucleotide sequence ID" value="NC_006513.1"/>
</dbReference>
<dbReference type="SMR" id="Q5P108"/>
<dbReference type="STRING" id="76114.ebA5085"/>
<dbReference type="KEGG" id="eba:ebA5085"/>
<dbReference type="eggNOG" id="COG1663">
    <property type="taxonomic scope" value="Bacteria"/>
</dbReference>
<dbReference type="HOGENOM" id="CLU_038816_2_0_4"/>
<dbReference type="OrthoDB" id="9766423at2"/>
<dbReference type="UniPathway" id="UPA00359">
    <property type="reaction ID" value="UER00482"/>
</dbReference>
<dbReference type="Proteomes" id="UP000006552">
    <property type="component" value="Chromosome"/>
</dbReference>
<dbReference type="GO" id="GO:0005886">
    <property type="term" value="C:plasma membrane"/>
    <property type="evidence" value="ECO:0007669"/>
    <property type="project" value="TreeGrafter"/>
</dbReference>
<dbReference type="GO" id="GO:0005524">
    <property type="term" value="F:ATP binding"/>
    <property type="evidence" value="ECO:0007669"/>
    <property type="project" value="UniProtKB-UniRule"/>
</dbReference>
<dbReference type="GO" id="GO:0009029">
    <property type="term" value="F:tetraacyldisaccharide 4'-kinase activity"/>
    <property type="evidence" value="ECO:0007669"/>
    <property type="project" value="UniProtKB-UniRule"/>
</dbReference>
<dbReference type="GO" id="GO:0009245">
    <property type="term" value="P:lipid A biosynthetic process"/>
    <property type="evidence" value="ECO:0007669"/>
    <property type="project" value="UniProtKB-UniRule"/>
</dbReference>
<dbReference type="GO" id="GO:0009244">
    <property type="term" value="P:lipopolysaccharide core region biosynthetic process"/>
    <property type="evidence" value="ECO:0007669"/>
    <property type="project" value="TreeGrafter"/>
</dbReference>
<dbReference type="HAMAP" id="MF_00409">
    <property type="entry name" value="LpxK"/>
    <property type="match status" value="1"/>
</dbReference>
<dbReference type="InterPro" id="IPR003758">
    <property type="entry name" value="LpxK"/>
</dbReference>
<dbReference type="InterPro" id="IPR027417">
    <property type="entry name" value="P-loop_NTPase"/>
</dbReference>
<dbReference type="NCBIfam" id="TIGR00682">
    <property type="entry name" value="lpxK"/>
    <property type="match status" value="1"/>
</dbReference>
<dbReference type="PANTHER" id="PTHR42724">
    <property type="entry name" value="TETRAACYLDISACCHARIDE 4'-KINASE"/>
    <property type="match status" value="1"/>
</dbReference>
<dbReference type="PANTHER" id="PTHR42724:SF1">
    <property type="entry name" value="TETRAACYLDISACCHARIDE 4'-KINASE, MITOCHONDRIAL-RELATED"/>
    <property type="match status" value="1"/>
</dbReference>
<dbReference type="Pfam" id="PF02606">
    <property type="entry name" value="LpxK"/>
    <property type="match status" value="1"/>
</dbReference>
<dbReference type="SUPFAM" id="SSF52540">
    <property type="entry name" value="P-loop containing nucleoside triphosphate hydrolases"/>
    <property type="match status" value="1"/>
</dbReference>
<accession>Q5P108</accession>
<proteinExistence type="inferred from homology"/>
<comment type="function">
    <text evidence="1">Transfers the gamma-phosphate of ATP to the 4'-position of a tetraacyldisaccharide 1-phosphate intermediate (termed DS-1-P) to form tetraacyldisaccharide 1,4'-bis-phosphate (lipid IVA).</text>
</comment>
<comment type="catalytic activity">
    <reaction evidence="1">
        <text>a lipid A disaccharide + ATP = a lipid IVA + ADP + H(+)</text>
        <dbReference type="Rhea" id="RHEA:67840"/>
        <dbReference type="ChEBI" id="CHEBI:15378"/>
        <dbReference type="ChEBI" id="CHEBI:30616"/>
        <dbReference type="ChEBI" id="CHEBI:176343"/>
        <dbReference type="ChEBI" id="CHEBI:176425"/>
        <dbReference type="ChEBI" id="CHEBI:456216"/>
        <dbReference type="EC" id="2.7.1.130"/>
    </reaction>
</comment>
<comment type="pathway">
    <text evidence="1">Glycolipid biosynthesis; lipid IV(A) biosynthesis; lipid IV(A) from (3R)-3-hydroxytetradecanoyl-[acyl-carrier-protein] and UDP-N-acetyl-alpha-D-glucosamine: step 6/6.</text>
</comment>
<comment type="similarity">
    <text evidence="1">Belongs to the LpxK family.</text>
</comment>
<protein>
    <recommendedName>
        <fullName evidence="1">Tetraacyldisaccharide 4'-kinase</fullName>
        <ecNumber evidence="1">2.7.1.130</ecNumber>
    </recommendedName>
    <alternativeName>
        <fullName evidence="1">Lipid A 4'-kinase</fullName>
    </alternativeName>
</protein>
<keyword id="KW-0067">ATP-binding</keyword>
<keyword id="KW-0418">Kinase</keyword>
<keyword id="KW-0441">Lipid A biosynthesis</keyword>
<keyword id="KW-0444">Lipid biosynthesis</keyword>
<keyword id="KW-0443">Lipid metabolism</keyword>
<keyword id="KW-0547">Nucleotide-binding</keyword>
<keyword id="KW-1185">Reference proteome</keyword>
<keyword id="KW-0808">Transferase</keyword>
<feature type="chain" id="PRO_0000229943" description="Tetraacyldisaccharide 4'-kinase">
    <location>
        <begin position="1"/>
        <end position="336"/>
    </location>
</feature>
<feature type="binding site" evidence="1">
    <location>
        <begin position="58"/>
        <end position="65"/>
    </location>
    <ligand>
        <name>ATP</name>
        <dbReference type="ChEBI" id="CHEBI:30616"/>
    </ligand>
</feature>
<organism>
    <name type="scientific">Aromatoleum aromaticum (strain DSM 19018 / LMG 30748 / EbN1)</name>
    <name type="common">Azoarcus sp. (strain EbN1)</name>
    <dbReference type="NCBI Taxonomy" id="76114"/>
    <lineage>
        <taxon>Bacteria</taxon>
        <taxon>Pseudomonadati</taxon>
        <taxon>Pseudomonadota</taxon>
        <taxon>Betaproteobacteria</taxon>
        <taxon>Rhodocyclales</taxon>
        <taxon>Rhodocyclaceae</taxon>
        <taxon>Aromatoleum</taxon>
    </lineage>
</organism>
<reference key="1">
    <citation type="journal article" date="2005" name="Arch. Microbiol.">
        <title>The genome sequence of an anaerobic aromatic-degrading denitrifying bacterium, strain EbN1.</title>
        <authorList>
            <person name="Rabus R."/>
            <person name="Kube M."/>
            <person name="Heider J."/>
            <person name="Beck A."/>
            <person name="Heitmann K."/>
            <person name="Widdel F."/>
            <person name="Reinhardt R."/>
        </authorList>
    </citation>
    <scope>NUCLEOTIDE SEQUENCE [LARGE SCALE GENOMIC DNA]</scope>
    <source>
        <strain>DSM 19018 / LMG 30748 / EbN1</strain>
    </source>
</reference>
<name>LPXK_AROAE</name>
<sequence>MARNAPAFWQTRSLAARLLLPLSGLFLLLAAVRRQLFRLGIRRAVRLPVPVVVVGNIAVGGSGKTPVVEWLVARLRDAGFTPGIVSRGYGGKAPGAVIVPPHGDVRLFGDEPVLLARLTACPVAVGADRPAAARALLQAYPGCDVIVADDGLQHYPLARDVEIAVVDERTLGNRWLLPAGPLREGPGRLRDVDIIIAHGALSPALSSLLDGRPVFAMHLEGSEFRRLDGAGCRNAEAFRGVRVHAVAGIGRPERFFAQLTRMGLEVVPHPFPDHHPFTAADLDFAPGEPKILTSKDAVKCASFASADTWEFPVKAHIAAGAAERILEKLTHGRPTA</sequence>
<gene>
    <name evidence="1" type="primary">lpxK</name>
    <name type="ordered locus">AZOSEA28810</name>
    <name type="ORF">ebA5085</name>
</gene>